<dbReference type="EMBL" id="AAFW02000151">
    <property type="protein sequence ID" value="EDN60066.1"/>
    <property type="molecule type" value="Genomic_DNA"/>
</dbReference>
<dbReference type="HOGENOM" id="CLU_060779_1_0_1"/>
<dbReference type="Proteomes" id="UP000007060">
    <property type="component" value="Unassembled WGS sequence"/>
</dbReference>
<protein>
    <recommendedName>
        <fullName>Maintenance of telomere capping protein 2</fullName>
    </recommendedName>
</protein>
<name>MTC2_YEAS7</name>
<sequence>MGDHNLPDFQTCLKFSVTAKKSFLCMYRDSVSKEKLASSMPSTCDIQLKRAINDAYPGGGIKVTVLNSTTASLDSLATTHVKEFEIVIIPDINSLLQPDQAKLVKIMRDCTVAIEKAQSTRIFIGVVHWNNPVQPSGAAKDGDEAGKPAPKTRIFLPTSFRMGAWLKHKFWFACAPPYLDFESSTESSINTRANNSIGMAEEEKQEPESKRSIILNEEANLNDVFVGSTVRRYILDIMVHLRTHRLTYNAKAGGVYTNSLDDVVLLSRLIGLHSGKMFVSPSHVKEASRWYFPMHLELVQRSSMDSSLLYGSDPNLVDEMLEKLAKIKCEEVNEFENPLFLESLVVKNVLSKVVPPV</sequence>
<feature type="chain" id="PRO_0000407768" description="Maintenance of telomere capping protein 2">
    <location>
        <begin position="1"/>
        <end position="357"/>
    </location>
</feature>
<organism>
    <name type="scientific">Saccharomyces cerevisiae (strain YJM789)</name>
    <name type="common">Baker's yeast</name>
    <dbReference type="NCBI Taxonomy" id="307796"/>
    <lineage>
        <taxon>Eukaryota</taxon>
        <taxon>Fungi</taxon>
        <taxon>Dikarya</taxon>
        <taxon>Ascomycota</taxon>
        <taxon>Saccharomycotina</taxon>
        <taxon>Saccharomycetes</taxon>
        <taxon>Saccharomycetales</taxon>
        <taxon>Saccharomycetaceae</taxon>
        <taxon>Saccharomyces</taxon>
    </lineage>
</organism>
<proteinExistence type="inferred from homology"/>
<comment type="function">
    <text evidence="1">May be involved in telomere capping.</text>
</comment>
<comment type="similarity">
    <text evidence="2">Belongs to the MTC2 family.</text>
</comment>
<gene>
    <name type="primary">MTC2</name>
    <name type="ORF">SCY_3278</name>
</gene>
<reference key="1">
    <citation type="journal article" date="2007" name="Proc. Natl. Acad. Sci. U.S.A.">
        <title>Genome sequencing and comparative analysis of Saccharomyces cerevisiae strain YJM789.</title>
        <authorList>
            <person name="Wei W."/>
            <person name="McCusker J.H."/>
            <person name="Hyman R.W."/>
            <person name="Jones T."/>
            <person name="Ning Y."/>
            <person name="Cao Z."/>
            <person name="Gu Z."/>
            <person name="Bruno D."/>
            <person name="Miranda M."/>
            <person name="Nguyen M."/>
            <person name="Wilhelmy J."/>
            <person name="Komp C."/>
            <person name="Tamse R."/>
            <person name="Wang X."/>
            <person name="Jia P."/>
            <person name="Luedi P."/>
            <person name="Oefner P.J."/>
            <person name="David L."/>
            <person name="Dietrich F.S."/>
            <person name="Li Y."/>
            <person name="Davis R.W."/>
            <person name="Steinmetz L.M."/>
        </authorList>
    </citation>
    <scope>NUCLEOTIDE SEQUENCE [LARGE SCALE GENOMIC DNA]</scope>
    <source>
        <strain>YJM789</strain>
    </source>
</reference>
<accession>A6ZZL8</accession>
<evidence type="ECO:0000250" key="1"/>
<evidence type="ECO:0000305" key="2"/>